<name>RL17_VIBA3</name>
<accession>B7VLD1</accession>
<proteinExistence type="inferred from homology"/>
<gene>
    <name evidence="1" type="primary">rplQ</name>
    <name type="ordered locus">VS_2806</name>
</gene>
<organism>
    <name type="scientific">Vibrio atlanticus (strain LGP32)</name>
    <name type="common">Vibrio splendidus (strain Mel32)</name>
    <dbReference type="NCBI Taxonomy" id="575788"/>
    <lineage>
        <taxon>Bacteria</taxon>
        <taxon>Pseudomonadati</taxon>
        <taxon>Pseudomonadota</taxon>
        <taxon>Gammaproteobacteria</taxon>
        <taxon>Vibrionales</taxon>
        <taxon>Vibrionaceae</taxon>
        <taxon>Vibrio</taxon>
    </lineage>
</organism>
<dbReference type="EMBL" id="FM954972">
    <property type="protein sequence ID" value="CAV20096.1"/>
    <property type="molecule type" value="Genomic_DNA"/>
</dbReference>
<dbReference type="SMR" id="B7VLD1"/>
<dbReference type="STRING" id="575788.VS_2806"/>
<dbReference type="KEGG" id="vsp:VS_2806"/>
<dbReference type="eggNOG" id="COG0203">
    <property type="taxonomic scope" value="Bacteria"/>
</dbReference>
<dbReference type="HOGENOM" id="CLU_074407_2_0_6"/>
<dbReference type="Proteomes" id="UP000009100">
    <property type="component" value="Chromosome 1"/>
</dbReference>
<dbReference type="GO" id="GO:0022625">
    <property type="term" value="C:cytosolic large ribosomal subunit"/>
    <property type="evidence" value="ECO:0007669"/>
    <property type="project" value="TreeGrafter"/>
</dbReference>
<dbReference type="GO" id="GO:0003735">
    <property type="term" value="F:structural constituent of ribosome"/>
    <property type="evidence" value="ECO:0007669"/>
    <property type="project" value="InterPro"/>
</dbReference>
<dbReference type="GO" id="GO:0006412">
    <property type="term" value="P:translation"/>
    <property type="evidence" value="ECO:0007669"/>
    <property type="project" value="UniProtKB-UniRule"/>
</dbReference>
<dbReference type="FunFam" id="3.90.1030.10:FF:000001">
    <property type="entry name" value="50S ribosomal protein L17"/>
    <property type="match status" value="1"/>
</dbReference>
<dbReference type="Gene3D" id="3.90.1030.10">
    <property type="entry name" value="Ribosomal protein L17"/>
    <property type="match status" value="1"/>
</dbReference>
<dbReference type="HAMAP" id="MF_01368">
    <property type="entry name" value="Ribosomal_bL17"/>
    <property type="match status" value="1"/>
</dbReference>
<dbReference type="InterPro" id="IPR000456">
    <property type="entry name" value="Ribosomal_bL17"/>
</dbReference>
<dbReference type="InterPro" id="IPR047859">
    <property type="entry name" value="Ribosomal_bL17_CS"/>
</dbReference>
<dbReference type="InterPro" id="IPR036373">
    <property type="entry name" value="Ribosomal_bL17_sf"/>
</dbReference>
<dbReference type="NCBIfam" id="TIGR00059">
    <property type="entry name" value="L17"/>
    <property type="match status" value="1"/>
</dbReference>
<dbReference type="PANTHER" id="PTHR14413:SF16">
    <property type="entry name" value="LARGE RIBOSOMAL SUBUNIT PROTEIN BL17M"/>
    <property type="match status" value="1"/>
</dbReference>
<dbReference type="PANTHER" id="PTHR14413">
    <property type="entry name" value="RIBOSOMAL PROTEIN L17"/>
    <property type="match status" value="1"/>
</dbReference>
<dbReference type="Pfam" id="PF01196">
    <property type="entry name" value="Ribosomal_L17"/>
    <property type="match status" value="1"/>
</dbReference>
<dbReference type="SUPFAM" id="SSF64263">
    <property type="entry name" value="Prokaryotic ribosomal protein L17"/>
    <property type="match status" value="1"/>
</dbReference>
<dbReference type="PROSITE" id="PS01167">
    <property type="entry name" value="RIBOSOMAL_L17"/>
    <property type="match status" value="1"/>
</dbReference>
<sequence length="126" mass="14265">MRHRKSGRQLNRNSSHRKAMFSNMASSLVRHEVIKTTVPKAKELRRVIEPLITLAKTDSVANRRLAFARTRDNEVVAKLFNELGPRFAARQGGYTRILKCGFRTGDKAPMAYIELVDRPAAEEAAE</sequence>
<evidence type="ECO:0000255" key="1">
    <source>
        <dbReference type="HAMAP-Rule" id="MF_01368"/>
    </source>
</evidence>
<evidence type="ECO:0000305" key="2"/>
<reference key="1">
    <citation type="submission" date="2009-02" db="EMBL/GenBank/DDBJ databases">
        <title>Vibrio splendidus str. LGP32 complete genome.</title>
        <authorList>
            <person name="Mazel D."/>
            <person name="Le Roux F."/>
        </authorList>
    </citation>
    <scope>NUCLEOTIDE SEQUENCE [LARGE SCALE GENOMIC DNA]</scope>
    <source>
        <strain>LGP32</strain>
    </source>
</reference>
<feature type="chain" id="PRO_1000184055" description="Large ribosomal subunit protein bL17">
    <location>
        <begin position="1"/>
        <end position="126"/>
    </location>
</feature>
<comment type="subunit">
    <text evidence="1">Part of the 50S ribosomal subunit. Contacts protein L32.</text>
</comment>
<comment type="similarity">
    <text evidence="1">Belongs to the bacterial ribosomal protein bL17 family.</text>
</comment>
<keyword id="KW-0687">Ribonucleoprotein</keyword>
<keyword id="KW-0689">Ribosomal protein</keyword>
<protein>
    <recommendedName>
        <fullName evidence="1">Large ribosomal subunit protein bL17</fullName>
    </recommendedName>
    <alternativeName>
        <fullName evidence="2">50S ribosomal protein L17</fullName>
    </alternativeName>
</protein>